<accession>P03391</accession>
<accession>P21446</accession>
<name>ENV_FSVGA</name>
<keyword id="KW-0165">Cleavage on pair of basic residues</keyword>
<keyword id="KW-0175">Coiled coil</keyword>
<keyword id="KW-1015">Disulfide bond</keyword>
<keyword id="KW-1169">Fusion of virus membrane with host cell membrane</keyword>
<keyword id="KW-1168">Fusion of virus membrane with host membrane</keyword>
<keyword id="KW-0325">Glycoprotein</keyword>
<keyword id="KW-1032">Host cell membrane</keyword>
<keyword id="KW-1043">Host membrane</keyword>
<keyword id="KW-0945">Host-virus interaction</keyword>
<keyword id="KW-0449">Lipoprotein</keyword>
<keyword id="KW-0472">Membrane</keyword>
<keyword id="KW-0564">Palmitate</keyword>
<keyword id="KW-0732">Signal</keyword>
<keyword id="KW-0812">Transmembrane</keyword>
<keyword id="KW-1133">Transmembrane helix</keyword>
<keyword id="KW-1161">Viral attachment to host cell</keyword>
<keyword id="KW-0261">Viral envelope protein</keyword>
<keyword id="KW-1162">Viral penetration into host cytoplasm</keyword>
<keyword id="KW-0946">Virion</keyword>
<keyword id="KW-1160">Virus entry into host cell</keyword>
<feature type="signal peptide" evidence="2">
    <location>
        <begin position="1"/>
        <end position="34"/>
    </location>
</feature>
<feature type="chain" id="PRO_0000239570" description="Envelope glycoprotein">
    <location>
        <begin position="35"/>
        <end position="662"/>
    </location>
</feature>
<feature type="chain" id="PRO_0000040724" description="Surface protein" evidence="1">
    <location>
        <begin position="35"/>
        <end position="465"/>
    </location>
</feature>
<feature type="chain" id="PRO_0000040725" description="Transmembrane protein" evidence="1">
    <location>
        <begin position="466"/>
        <end position="645"/>
    </location>
</feature>
<feature type="peptide" id="PRO_0000239571" description="R-peptide" evidence="1">
    <location>
        <begin position="646"/>
        <end position="662"/>
    </location>
</feature>
<feature type="topological domain" description="Extracellular" evidence="2">
    <location>
        <begin position="35"/>
        <end position="606"/>
    </location>
</feature>
<feature type="transmembrane region" description="Helical" evidence="2">
    <location>
        <begin position="607"/>
        <end position="627"/>
    </location>
</feature>
<feature type="topological domain" description="Cytoplasmic" evidence="2">
    <location>
        <begin position="628"/>
        <end position="662"/>
    </location>
</feature>
<feature type="region of interest" description="Disordered" evidence="3">
    <location>
        <begin position="245"/>
        <end position="279"/>
    </location>
</feature>
<feature type="region of interest" description="Fusion peptide" evidence="2">
    <location>
        <begin position="468"/>
        <end position="488"/>
    </location>
</feature>
<feature type="region of interest" description="Immunosuppression" evidence="1">
    <location>
        <begin position="534"/>
        <end position="550"/>
    </location>
</feature>
<feature type="coiled-coil region" evidence="2">
    <location>
        <begin position="496"/>
        <end position="545"/>
    </location>
</feature>
<feature type="coiled-coil region" evidence="2">
    <location>
        <begin position="555"/>
        <end position="591"/>
    </location>
</feature>
<feature type="short sequence motif" description="CXXC">
    <location>
        <begin position="332"/>
        <end position="335"/>
    </location>
</feature>
<feature type="short sequence motif" description="CX6CC">
    <location>
        <begin position="551"/>
        <end position="559"/>
    </location>
</feature>
<feature type="compositionally biased region" description="Polar residues" evidence="3">
    <location>
        <begin position="258"/>
        <end position="274"/>
    </location>
</feature>
<feature type="site" description="Cleavage; by host" evidence="1">
    <location>
        <begin position="465"/>
        <end position="466"/>
    </location>
</feature>
<feature type="site" description="Cleavage; by viral protease" evidence="1">
    <location>
        <begin position="645"/>
        <end position="646"/>
    </location>
</feature>
<feature type="lipid moiety-binding region" description="S-palmitoyl cysteine; by host" evidence="1">
    <location>
        <position position="626"/>
    </location>
</feature>
<feature type="glycosylation site" description="N-linked (GlcNAc...) asparagine; by host" evidence="2">
    <location>
        <position position="43"/>
    </location>
</feature>
<feature type="glycosylation site" description="N-linked (GlcNAc...) asparagine; by host" evidence="2">
    <location>
        <position position="58"/>
    </location>
</feature>
<feature type="glycosylation site" description="N-linked (GlcNAc...) asparagine; by host" evidence="2">
    <location>
        <position position="286"/>
    </location>
</feature>
<feature type="glycosylation site" description="N-linked (GlcNAc...) asparagine; by host" evidence="2">
    <location>
        <position position="322"/>
    </location>
</feature>
<feature type="glycosylation site" description="N-linked (GlcNAc...) asparagine; by host" evidence="2">
    <location>
        <position position="327"/>
    </location>
</feature>
<feature type="glycosylation site" description="N-linked (GlcNAc...) asparagine; by host" evidence="2">
    <location>
        <position position="351"/>
    </location>
</feature>
<feature type="glycosylation site" description="N-linked (GlcNAc...) asparagine; by host" evidence="2">
    <location>
        <position position="354"/>
    </location>
</feature>
<feature type="glycosylation site" description="N-linked (GlcNAc...) asparagine; by host" evidence="2">
    <location>
        <position position="394"/>
    </location>
</feature>
<feature type="glycosylation site" description="N-linked (GlcNAc...) asparagine; by host" evidence="2">
    <location>
        <position position="410"/>
    </location>
</feature>
<feature type="glycosylation site" description="N-linked (GlcNAc...) asparagine; by host" evidence="2">
    <location>
        <position position="430"/>
    </location>
</feature>
<feature type="disulfide bond" evidence="1">
    <location>
        <begin position="115"/>
        <end position="132"/>
    </location>
</feature>
<feature type="disulfide bond" evidence="1">
    <location>
        <begin position="124"/>
        <end position="137"/>
    </location>
</feature>
<feature type="disulfide bond" description="Interchain (between SU and TM chains, or C-335 with C-559); in linked form" evidence="1">
    <location>
        <begin position="332"/>
        <end position="559"/>
    </location>
</feature>
<feature type="disulfide bond" evidence="1">
    <location>
        <begin position="332"/>
        <end position="335"/>
    </location>
</feature>
<feature type="disulfide bond" evidence="1">
    <location>
        <begin position="551"/>
        <end position="558"/>
    </location>
</feature>
<feature type="sequence conflict" description="In Ref. 4." evidence="4" ref="4">
    <location>
        <position position="15"/>
    </location>
</feature>
<feature type="sequence conflict" description="In Ref. 4." evidence="4" ref="4">
    <original>V</original>
    <variation>I</variation>
    <location>
        <position position="41"/>
    </location>
</feature>
<feature type="sequence conflict" description="In Ref. 4." evidence="4" ref="4">
    <original>T</original>
    <variation>V</variation>
    <location>
        <position position="47"/>
    </location>
</feature>
<feature type="sequence conflict" description="In Ref. 4." evidence="4" ref="4">
    <original>LVTGTK</original>
    <variation>VQTNTQ</variation>
    <location>
        <begin position="51"/>
        <end position="56"/>
    </location>
</feature>
<feature type="sequence conflict" description="In Ref. 4." evidence="4" ref="4">
    <original>FPTMYF</original>
    <variation>YPTLHV</variation>
    <location>
        <begin position="70"/>
        <end position="75"/>
    </location>
</feature>
<feature type="sequence conflict" description="In Ref. 4." evidence="4" ref="4">
    <original>IIGNTWNPSDQEPFPG</original>
    <variation>LVGDSWEPIVLDPNNVKHGARYSSSK</variation>
    <location>
        <begin position="80"/>
        <end position="95"/>
    </location>
</feature>
<feature type="sequence conflict" description="In Ref. 4." evidence="4" ref="4">
    <original>DQPMRRWQQRNT</original>
    <variation>KTTDRKKQQQTY</variation>
    <location>
        <begin position="99"/>
        <end position="110"/>
    </location>
</feature>
<feature type="sequence conflict" description="In Ref. 4." evidence="4" ref="4">
    <original>NRKQ</original>
    <variation>PSLGPKGTH</variation>
    <location>
        <begin position="120"/>
        <end position="123"/>
    </location>
</feature>
<feature type="sequence conflict" description="In Ref. 4." evidence="4" ref="4">
    <original>P</original>
    <variation>A</variation>
    <location>
        <position position="127"/>
    </location>
</feature>
<feature type="sequence conflict" description="In Ref. 4." evidence="4" ref="4">
    <original>V</original>
    <variation>A</variation>
    <location>
        <position position="134"/>
    </location>
</feature>
<feature type="sequence conflict" description="In Ref. 4." evidence="4" ref="4">
    <original>TYWRPT</original>
    <variation>AWWKPS</variation>
    <location>
        <begin position="143"/>
        <end position="148"/>
    </location>
</feature>
<feature type="sequence conflict" description="In Ref. 4." evidence="4" ref="4">
    <original>KGVTQGIYQCSGGGWCGPCYDKAVHSSTTGASEGGR</original>
    <variation>RGSSQDTNSCEGK</variation>
    <location>
        <begin position="158"/>
        <end position="193"/>
    </location>
</feature>
<feature type="sequence conflict" description="In Ref. 4." evidence="4" ref="4">
    <original>T</original>
    <variation>A</variation>
    <location>
        <position position="208"/>
    </location>
</feature>
<feature type="sequence conflict" description="In Ref. 4." evidence="4" ref="4">
    <original>S</original>
    <variation>M</variation>
    <location>
        <position position="215"/>
    </location>
</feature>
<feature type="sequence conflict" description="In Ref. 4." evidence="4" ref="4">
    <original>S</original>
    <variation>T</variation>
    <location>
        <position position="223"/>
    </location>
</feature>
<feature type="sequence conflict" description="In Ref. 4." evidence="4" ref="4">
    <original>S</original>
    <variation>T</variation>
    <location>
        <position position="232"/>
    </location>
</feature>
<feature type="sequence conflict" description="In Ref. 4." evidence="4" ref="4">
    <original>M</original>
    <variation>S</variation>
    <location>
        <position position="238"/>
    </location>
</feature>
<feature type="sequence conflict" description="In Ref. 4." evidence="4" ref="4">
    <original>IESRVTPHHSQGNGGTPGITLVNASIAPLSTPVTPAS</original>
    <variation>TGSKVATQRPQTNESAPRSVAPTTMG</variation>
    <location>
        <begin position="264"/>
        <end position="300"/>
    </location>
</feature>
<sequence length="662" mass="73150">MESPTHPKPSKDKTLSWNLVFLVGILFTIDIGMANPSPHQVYNVTWTITNLVTGTKANATSMLGTLTDAFPTMYFDLCDIIGNTWNPSDQEPFPGYGCDQPMRRWQQRNTPFYVCPGHANRKQCGGPQDGFCAVWGCETTGETYWRPTSSWDYITVKKGVTQGIYQCSGGGWCGPCYDKAVHSSTTGASEGGRCNPLILQFTQKGRQTSWDGPKSWGLRLYRSGYDPIALFSVSRQVMTITPPQAMGPNLVLPDQKPPSRQSQIESRVTPHHSQGNGGTPGITLVNASIAPLSTPVTPASPKRIGTGDRLINLVQGTYLALNATDPNRTKDCWLCLVSRPPYYEGIAILGNYSNQTNPPPSCLSIPQHKLTISEVSGQGLCIGTVPKTHQALCNETQQGHTGAHYLAAPNGTYWACNTGLTPCISMAVLNWTSDFCVLIELWPRVTYHQPEYVYTHFAKAARFRREPISLTVALMLGGLTVGGIAAGVGTGTKALIETAQFRQLQMAMHTDIQALEESISALEKSLTSLSEVVLQNRRGLDILFLQEGGLCAALKEECCFYADHTGLVRDNMAKLRERLKQRQQLFDSQQGWFEGWFNKSPWFTTLISSIMGPLLILLLILLFGPCILNRLVQFVKDRISVVQALILTQQYQQIKQYDPDRP</sequence>
<protein>
    <recommendedName>
        <fullName>Envelope glycoprotein</fullName>
    </recommendedName>
    <alternativeName>
        <fullName>Env polyprotein</fullName>
    </alternativeName>
    <component>
        <recommendedName>
            <fullName>Surface protein</fullName>
            <shortName>SU</shortName>
        </recommendedName>
        <alternativeName>
            <fullName>Glycoprotein 70</fullName>
            <shortName>gp70</shortName>
        </alternativeName>
    </component>
    <component>
        <recommendedName>
            <fullName>Transmembrane protein</fullName>
            <shortName>TM</shortName>
        </recommendedName>
        <alternativeName>
            <fullName>Envelope protein p15E</fullName>
        </alternativeName>
    </component>
    <component>
        <recommendedName>
            <fullName>R-peptide</fullName>
        </recommendedName>
        <alternativeName>
            <fullName>p2E</fullName>
        </alternativeName>
    </component>
</protein>
<dbReference type="EMBL" id="K01209">
    <property type="protein sequence ID" value="AAA43052.1"/>
    <property type="molecule type" value="Genomic_RNA"/>
</dbReference>
<dbReference type="EMBL" id="V01172">
    <property type="protein sequence ID" value="CAA24497.1"/>
    <property type="molecule type" value="Genomic_DNA"/>
</dbReference>
<dbReference type="EMBL" id="X00188">
    <property type="protein sequence ID" value="CAA25008.1"/>
    <property type="molecule type" value="Genomic_DNA"/>
</dbReference>
<dbReference type="EMBL" id="M23026">
    <property type="status" value="NOT_ANNOTATED_CDS"/>
    <property type="molecule type" value="Genomic_DNA"/>
</dbReference>
<dbReference type="PIR" id="A03991">
    <property type="entry name" value="VCVWGF"/>
</dbReference>
<dbReference type="SMR" id="P03391"/>
<dbReference type="GlyCosmos" id="P03391">
    <property type="glycosylation" value="10 sites, No reported glycans"/>
</dbReference>
<dbReference type="GO" id="GO:0020002">
    <property type="term" value="C:host cell plasma membrane"/>
    <property type="evidence" value="ECO:0007669"/>
    <property type="project" value="UniProtKB-SubCell"/>
</dbReference>
<dbReference type="GO" id="GO:0016020">
    <property type="term" value="C:membrane"/>
    <property type="evidence" value="ECO:0007669"/>
    <property type="project" value="UniProtKB-KW"/>
</dbReference>
<dbReference type="GO" id="GO:0019031">
    <property type="term" value="C:viral envelope"/>
    <property type="evidence" value="ECO:0007669"/>
    <property type="project" value="UniProtKB-KW"/>
</dbReference>
<dbReference type="GO" id="GO:0055036">
    <property type="term" value="C:virion membrane"/>
    <property type="evidence" value="ECO:0007669"/>
    <property type="project" value="UniProtKB-SubCell"/>
</dbReference>
<dbReference type="GO" id="GO:0019064">
    <property type="term" value="P:fusion of virus membrane with host plasma membrane"/>
    <property type="evidence" value="ECO:0007669"/>
    <property type="project" value="UniProtKB-KW"/>
</dbReference>
<dbReference type="GO" id="GO:0046718">
    <property type="term" value="P:symbiont entry into host cell"/>
    <property type="evidence" value="ECO:0007669"/>
    <property type="project" value="UniProtKB-KW"/>
</dbReference>
<dbReference type="GO" id="GO:0019062">
    <property type="term" value="P:virion attachment to host cell"/>
    <property type="evidence" value="ECO:0007669"/>
    <property type="project" value="UniProtKB-KW"/>
</dbReference>
<dbReference type="CDD" id="cd09851">
    <property type="entry name" value="HTLV-1-like_HR1-HR2"/>
    <property type="match status" value="1"/>
</dbReference>
<dbReference type="Gene3D" id="1.10.287.210">
    <property type="match status" value="1"/>
</dbReference>
<dbReference type="Gene3D" id="3.90.310.10">
    <property type="entry name" value="ENV polyprotein, receptor-binding domain"/>
    <property type="match status" value="1"/>
</dbReference>
<dbReference type="InterPro" id="IPR008981">
    <property type="entry name" value="FMuLV_rcpt-bd"/>
</dbReference>
<dbReference type="InterPro" id="IPR018154">
    <property type="entry name" value="TLV/ENV_coat_polyprotein"/>
</dbReference>
<dbReference type="PANTHER" id="PTHR10424:SF72">
    <property type="entry name" value="BC035947 PROTEIN-RELATED"/>
    <property type="match status" value="1"/>
</dbReference>
<dbReference type="PANTHER" id="PTHR10424">
    <property type="entry name" value="VIRAL ENVELOPE PROTEIN"/>
    <property type="match status" value="1"/>
</dbReference>
<dbReference type="Pfam" id="PF00429">
    <property type="entry name" value="TLV_coat"/>
    <property type="match status" value="1"/>
</dbReference>
<dbReference type="SUPFAM" id="SSF49830">
    <property type="entry name" value="ENV polyprotein, receptor-binding domain"/>
    <property type="match status" value="1"/>
</dbReference>
<dbReference type="SUPFAM" id="SSF58069">
    <property type="entry name" value="Virus ectodomain"/>
    <property type="match status" value="1"/>
</dbReference>
<reference key="1">
    <citation type="journal article" date="1984" name="J. Virol.">
        <title>Nucleotide sequences of the envelope genes of two isolates of feline leukemia virus subgroup B.</title>
        <authorList>
            <person name="Nunberg J.H."/>
            <person name="Williams M.E."/>
            <person name="Innis M.A."/>
        </authorList>
    </citation>
    <scope>NUCLEOTIDE SEQUENCE [GENOMIC RNA]</scope>
</reference>
<reference key="2">
    <citation type="journal article" date="1983" name="J. Virol.">
        <title>Nucleotide sequence of the envelope gene of Gardner-Arnstein feline leukemia virus B reveals unique sequence homologies with a murine mink cell focus-forming virus.</title>
        <authorList>
            <person name="Elder J.H."/>
            <person name="Mullins J.I."/>
        </authorList>
    </citation>
    <scope>NUCLEOTIDE SEQUENCE [GENOMIC DNA]</scope>
</reference>
<reference key="3">
    <citation type="journal article" date="1983" name="EMBO J.">
        <title>Sequence analysis of Gardner-Arnstein feline leukaemia virus envelope gene reveals common structural properties of mammalian retroviral envelope genes.</title>
        <authorList>
            <person name="Wunsch M."/>
            <person name="Schulz A.S."/>
            <person name="Koch W."/>
            <person name="Friedrich R."/>
            <person name="Hunsmann G."/>
        </authorList>
    </citation>
    <scope>NUCLEOTIDE SEQUENCE [GENOMIC DNA]</scope>
</reference>
<reference key="4">
    <citation type="journal article" date="1987" name="Virology">
        <title>Nucleotide sequence analysis of the LTRs and env genes of SM-FeSV and GA-FeSV.</title>
        <authorList>
            <person name="Guilhot S."/>
            <person name="Hampe A."/>
            <person name="D'Auriol L."/>
            <person name="Galibert F."/>
        </authorList>
    </citation>
    <scope>NUCLEOTIDE SEQUENCE [GENOMIC DNA]</scope>
</reference>
<organismHost>
    <name type="scientific">Felidae</name>
    <name type="common">cat family</name>
    <dbReference type="NCBI Taxonomy" id="9681"/>
</organismHost>
<gene>
    <name type="primary">env</name>
</gene>
<evidence type="ECO:0000250" key="1"/>
<evidence type="ECO:0000255" key="2"/>
<evidence type="ECO:0000256" key="3">
    <source>
        <dbReference type="SAM" id="MobiDB-lite"/>
    </source>
</evidence>
<evidence type="ECO:0000305" key="4"/>
<comment type="function">
    <text evidence="1">The surface protein (SU) attaches the virus to the host cell by binding to its receptor. This interaction triggers the refolding of the transmembrane protein (TM) and is thought to activate its fusogenic potential by unmasking its fusion peptide. Fusion occurs at the host cell plasma membrane (By similarity).</text>
</comment>
<comment type="function">
    <text evidence="1">The transmembrane protein (TM) acts as a class I viral fusion protein. Under the current model, the protein has at least 3 conformational states: pre-fusion native state, pre-hairpin intermediate state, and post-fusion hairpin state. During viral and target cell membrane fusion, the coiled coil regions (heptad repeats) assume a trimer-of-hairpins structure, positioning the fusion peptide in close proximity to the C-terminal region of the ectodomain. The formation of this structure appears to drive apposition and subsequent fusion of viral and target cell membranes. Membranes fusion leads to delivery of the nucleocapsid into the cytoplasm (By similarity).</text>
</comment>
<comment type="subunit">
    <text evidence="1">The mature envelope protein (Env) consists of a trimer of SU-TM heterodimers attached by a labile interchain disulfide bond.</text>
</comment>
<comment type="subcellular location">
    <molecule>Transmembrane protein</molecule>
    <subcellularLocation>
        <location evidence="1">Virion membrane</location>
        <topology evidence="1">Single-pass type I membrane protein</topology>
    </subcellularLocation>
    <subcellularLocation>
        <location evidence="1">Host cell membrane</location>
        <topology evidence="1">Single-pass type I membrane protein</topology>
    </subcellularLocation>
</comment>
<comment type="subcellular location">
    <molecule>Surface protein</molecule>
    <subcellularLocation>
        <location>Virion membrane</location>
        <topology>Peripheral membrane protein</topology>
    </subcellularLocation>
    <subcellularLocation>
        <location evidence="1">Host cell membrane</location>
        <topology evidence="1">Peripheral membrane protein</topology>
    </subcellularLocation>
    <text evidence="1">The surface protein is not anchored to the viral envelope, but associates with the extravirion surface through its binding to TM. Both proteins are thought to be concentrated at the site of budding and incorporated into the virions possibly by contacts between the cytoplasmic tail of Env and the N-terminus of Gag (By similarity).</text>
</comment>
<comment type="subcellular location">
    <molecule>R-peptide</molecule>
    <subcellularLocation>
        <location evidence="1">Host cell membrane</location>
        <topology evidence="1">Peripheral membrane protein</topology>
    </subcellularLocation>
    <text evidence="1">The R-peptide is membrane-associated through its palmitate.</text>
</comment>
<comment type="domain">
    <text evidence="1">The 17 amino acids long immunosuppressive region is present in many retroviral envelope proteins. Synthetic peptides derived from this relatively conserved sequence inhibit immune function in vitro and in vivo (By similarity).</text>
</comment>
<comment type="PTM">
    <text evidence="1">Specific enzymatic cleavages in vivo yield mature proteins. Envelope glycoproteins are synthesized as an inactive precursor that is N-glycosylated and processed likely by host cell furin or by a furin-like protease in the Golgi to yield the mature SU and TM proteins. The cleavage site between SU and TM requires the minimal sequence [KR]-X-[KR]-R. The R-peptide is released from the C-terminus of the cytoplasmic tail of the TM protein upon particle formation as a result of proteolytic cleavage by the viral protease. Cleavage of this peptide is required for TM to become fusogenic (By similarity).</text>
</comment>
<comment type="PTM">
    <text evidence="1">The CXXC motif is highly conserved across a broad range of retroviral envelope proteins. It is thought to participate in the formation of a labile disulfide bond possibly with the CX6CC motif present in the transmembrane protein. Isomerization of the intersubunit disulfide bond to an SU intrachain disulfide bond is thought to occur upon receptor recognition in order to allow membrane fusion (By similarity).</text>
</comment>
<comment type="PTM">
    <text evidence="1">The transmembrane protein is palmitoylated.</text>
</comment>
<comment type="PTM">
    <text evidence="1">The R-peptide is palmitoylated.</text>
</comment>
<organism>
    <name type="scientific">Feline sarcoma virus (strain Gardner-Arnstein)</name>
    <name type="common">Ga-FeSV</name>
    <name type="synonym">Gardner-Arnstein feline leukemia oncovirus B</name>
    <dbReference type="NCBI Taxonomy" id="11774"/>
    <lineage>
        <taxon>Viruses</taxon>
        <taxon>Riboviria</taxon>
        <taxon>Pararnavirae</taxon>
        <taxon>Artverviricota</taxon>
        <taxon>Revtraviricetes</taxon>
        <taxon>Ortervirales</taxon>
        <taxon>Retroviridae</taxon>
        <taxon>Orthoretrovirinae</taxon>
        <taxon>Gammaretrovirus</taxon>
    </lineage>
</organism>
<proteinExistence type="inferred from homology"/>